<reference key="1">
    <citation type="journal article" date="2011" name="Stand. Genomic Sci.">
        <title>Complete genome sequence of the halophilic and highly halotolerant Chromohalobacter salexigens type strain (1H11(T)).</title>
        <authorList>
            <person name="Copeland A."/>
            <person name="O'Connor K."/>
            <person name="Lucas S."/>
            <person name="Lapidus A."/>
            <person name="Berry K.W."/>
            <person name="Detter J.C."/>
            <person name="Del Rio T.G."/>
            <person name="Hammon N."/>
            <person name="Dalin E."/>
            <person name="Tice H."/>
            <person name="Pitluck S."/>
            <person name="Bruce D."/>
            <person name="Goodwin L."/>
            <person name="Han C."/>
            <person name="Tapia R."/>
            <person name="Saunders E."/>
            <person name="Schmutz J."/>
            <person name="Brettin T."/>
            <person name="Larimer F."/>
            <person name="Land M."/>
            <person name="Hauser L."/>
            <person name="Vargas C."/>
            <person name="Nieto J.J."/>
            <person name="Kyrpides N.C."/>
            <person name="Ivanova N."/>
            <person name="Goker M."/>
            <person name="Klenk H.P."/>
            <person name="Csonka L.N."/>
            <person name="Woyke T."/>
        </authorList>
    </citation>
    <scope>NUCLEOTIDE SEQUENCE [LARGE SCALE GENOMIC DNA]</scope>
    <source>
        <strain>ATCC BAA-138 / DSM 3043 / CIP 106854 / NCIMB 13768 / 1H11</strain>
    </source>
</reference>
<accession>Q1QWK3</accession>
<keyword id="KW-0030">Aminoacyl-tRNA synthetase</keyword>
<keyword id="KW-0067">ATP-binding</keyword>
<keyword id="KW-0963">Cytoplasm</keyword>
<keyword id="KW-0436">Ligase</keyword>
<keyword id="KW-0460">Magnesium</keyword>
<keyword id="KW-0479">Metal-binding</keyword>
<keyword id="KW-0547">Nucleotide-binding</keyword>
<keyword id="KW-0648">Protein biosynthesis</keyword>
<keyword id="KW-1185">Reference proteome</keyword>
<sequence>MDHLPQLVAEARAAIESAEDVQSLDEVRVRYLGKKGEITALLKGLGKLPAEERPKAGEQINDAKQVLSDELEARKKHLQDAELNARLAQERIDVTLPGRGEPTGGLHPVTRTLERIESLFAHIGFDVAVGPELEDDYHNFEALNIPAHHPARGMADTFYFDASRLLRTHTSPVQVRTMKEQAPPIRIVCPGRVYRSDSDLTHTPMFHQVEGLLVDEDVSFADLKGTIEDFLKAFFERESLSVRFRPSYFPFTEPSAEVDIQCVMCGGDGCRVCSHSGWLEVMGCGMVHPEVFRHSGIDAERYTGFAFGMGAERLTMLRYGVNDLRLFFENDLRFLRQFG</sequence>
<name>SYFA_CHRSD</name>
<evidence type="ECO:0000255" key="1">
    <source>
        <dbReference type="HAMAP-Rule" id="MF_00281"/>
    </source>
</evidence>
<protein>
    <recommendedName>
        <fullName evidence="1">Phenylalanine--tRNA ligase alpha subunit</fullName>
        <ecNumber evidence="1">6.1.1.20</ecNumber>
    </recommendedName>
    <alternativeName>
        <fullName evidence="1">Phenylalanyl-tRNA synthetase alpha subunit</fullName>
        <shortName evidence="1">PheRS</shortName>
    </alternativeName>
</protein>
<gene>
    <name evidence="1" type="primary">pheS</name>
    <name type="ordered locus">Csal_1803</name>
</gene>
<proteinExistence type="inferred from homology"/>
<feature type="chain" id="PRO_1000006813" description="Phenylalanine--tRNA ligase alpha subunit">
    <location>
        <begin position="1"/>
        <end position="339"/>
    </location>
</feature>
<feature type="binding site" evidence="1">
    <location>
        <position position="253"/>
    </location>
    <ligand>
        <name>Mg(2+)</name>
        <dbReference type="ChEBI" id="CHEBI:18420"/>
        <note>shared with beta subunit</note>
    </ligand>
</feature>
<organism>
    <name type="scientific">Chromohalobacter salexigens (strain ATCC BAA-138 / DSM 3043 / CIP 106854 / NCIMB 13768 / 1H11)</name>
    <dbReference type="NCBI Taxonomy" id="290398"/>
    <lineage>
        <taxon>Bacteria</taxon>
        <taxon>Pseudomonadati</taxon>
        <taxon>Pseudomonadota</taxon>
        <taxon>Gammaproteobacteria</taxon>
        <taxon>Oceanospirillales</taxon>
        <taxon>Halomonadaceae</taxon>
        <taxon>Chromohalobacter</taxon>
    </lineage>
</organism>
<comment type="catalytic activity">
    <reaction evidence="1">
        <text>tRNA(Phe) + L-phenylalanine + ATP = L-phenylalanyl-tRNA(Phe) + AMP + diphosphate + H(+)</text>
        <dbReference type="Rhea" id="RHEA:19413"/>
        <dbReference type="Rhea" id="RHEA-COMP:9668"/>
        <dbReference type="Rhea" id="RHEA-COMP:9699"/>
        <dbReference type="ChEBI" id="CHEBI:15378"/>
        <dbReference type="ChEBI" id="CHEBI:30616"/>
        <dbReference type="ChEBI" id="CHEBI:33019"/>
        <dbReference type="ChEBI" id="CHEBI:58095"/>
        <dbReference type="ChEBI" id="CHEBI:78442"/>
        <dbReference type="ChEBI" id="CHEBI:78531"/>
        <dbReference type="ChEBI" id="CHEBI:456215"/>
        <dbReference type="EC" id="6.1.1.20"/>
    </reaction>
</comment>
<comment type="cofactor">
    <cofactor evidence="1">
        <name>Mg(2+)</name>
        <dbReference type="ChEBI" id="CHEBI:18420"/>
    </cofactor>
    <text evidence="1">Binds 2 magnesium ions per tetramer.</text>
</comment>
<comment type="subunit">
    <text evidence="1">Tetramer of two alpha and two beta subunits.</text>
</comment>
<comment type="subcellular location">
    <subcellularLocation>
        <location evidence="1">Cytoplasm</location>
    </subcellularLocation>
</comment>
<comment type="similarity">
    <text evidence="1">Belongs to the class-II aminoacyl-tRNA synthetase family. Phe-tRNA synthetase alpha subunit type 1 subfamily.</text>
</comment>
<dbReference type="EC" id="6.1.1.20" evidence="1"/>
<dbReference type="EMBL" id="CP000285">
    <property type="protein sequence ID" value="ABE59155.1"/>
    <property type="molecule type" value="Genomic_DNA"/>
</dbReference>
<dbReference type="RefSeq" id="WP_011507101.1">
    <property type="nucleotide sequence ID" value="NC_007963.1"/>
</dbReference>
<dbReference type="SMR" id="Q1QWK3"/>
<dbReference type="STRING" id="290398.Csal_1803"/>
<dbReference type="GeneID" id="95334516"/>
<dbReference type="KEGG" id="csa:Csal_1803"/>
<dbReference type="eggNOG" id="COG0016">
    <property type="taxonomic scope" value="Bacteria"/>
</dbReference>
<dbReference type="HOGENOM" id="CLU_025086_0_1_6"/>
<dbReference type="OrthoDB" id="9800719at2"/>
<dbReference type="Proteomes" id="UP000000239">
    <property type="component" value="Chromosome"/>
</dbReference>
<dbReference type="GO" id="GO:0005737">
    <property type="term" value="C:cytoplasm"/>
    <property type="evidence" value="ECO:0007669"/>
    <property type="project" value="UniProtKB-SubCell"/>
</dbReference>
<dbReference type="GO" id="GO:0005524">
    <property type="term" value="F:ATP binding"/>
    <property type="evidence" value="ECO:0007669"/>
    <property type="project" value="UniProtKB-UniRule"/>
</dbReference>
<dbReference type="GO" id="GO:0000287">
    <property type="term" value="F:magnesium ion binding"/>
    <property type="evidence" value="ECO:0007669"/>
    <property type="project" value="UniProtKB-UniRule"/>
</dbReference>
<dbReference type="GO" id="GO:0004826">
    <property type="term" value="F:phenylalanine-tRNA ligase activity"/>
    <property type="evidence" value="ECO:0007669"/>
    <property type="project" value="UniProtKB-UniRule"/>
</dbReference>
<dbReference type="GO" id="GO:0000049">
    <property type="term" value="F:tRNA binding"/>
    <property type="evidence" value="ECO:0007669"/>
    <property type="project" value="InterPro"/>
</dbReference>
<dbReference type="GO" id="GO:0006432">
    <property type="term" value="P:phenylalanyl-tRNA aminoacylation"/>
    <property type="evidence" value="ECO:0007669"/>
    <property type="project" value="UniProtKB-UniRule"/>
</dbReference>
<dbReference type="CDD" id="cd00496">
    <property type="entry name" value="PheRS_alpha_core"/>
    <property type="match status" value="1"/>
</dbReference>
<dbReference type="FunFam" id="3.30.930.10:FF:000003">
    <property type="entry name" value="Phenylalanine--tRNA ligase alpha subunit"/>
    <property type="match status" value="1"/>
</dbReference>
<dbReference type="Gene3D" id="3.30.930.10">
    <property type="entry name" value="Bira Bifunctional Protein, Domain 2"/>
    <property type="match status" value="1"/>
</dbReference>
<dbReference type="HAMAP" id="MF_00281">
    <property type="entry name" value="Phe_tRNA_synth_alpha1"/>
    <property type="match status" value="1"/>
</dbReference>
<dbReference type="InterPro" id="IPR006195">
    <property type="entry name" value="aa-tRNA-synth_II"/>
</dbReference>
<dbReference type="InterPro" id="IPR045864">
    <property type="entry name" value="aa-tRNA-synth_II/BPL/LPL"/>
</dbReference>
<dbReference type="InterPro" id="IPR004529">
    <property type="entry name" value="Phe-tRNA-synth_IIc_asu"/>
</dbReference>
<dbReference type="InterPro" id="IPR004188">
    <property type="entry name" value="Phe-tRNA_ligase_II_N"/>
</dbReference>
<dbReference type="InterPro" id="IPR022911">
    <property type="entry name" value="Phe_tRNA_ligase_alpha1_bac"/>
</dbReference>
<dbReference type="InterPro" id="IPR002319">
    <property type="entry name" value="Phenylalanyl-tRNA_Synthase"/>
</dbReference>
<dbReference type="InterPro" id="IPR010978">
    <property type="entry name" value="tRNA-bd_arm"/>
</dbReference>
<dbReference type="NCBIfam" id="TIGR00468">
    <property type="entry name" value="pheS"/>
    <property type="match status" value="1"/>
</dbReference>
<dbReference type="PANTHER" id="PTHR11538:SF41">
    <property type="entry name" value="PHENYLALANINE--TRNA LIGASE, MITOCHONDRIAL"/>
    <property type="match status" value="1"/>
</dbReference>
<dbReference type="PANTHER" id="PTHR11538">
    <property type="entry name" value="PHENYLALANYL-TRNA SYNTHETASE"/>
    <property type="match status" value="1"/>
</dbReference>
<dbReference type="Pfam" id="PF02912">
    <property type="entry name" value="Phe_tRNA-synt_N"/>
    <property type="match status" value="1"/>
</dbReference>
<dbReference type="Pfam" id="PF01409">
    <property type="entry name" value="tRNA-synt_2d"/>
    <property type="match status" value="1"/>
</dbReference>
<dbReference type="SUPFAM" id="SSF55681">
    <property type="entry name" value="Class II aaRS and biotin synthetases"/>
    <property type="match status" value="1"/>
</dbReference>
<dbReference type="SUPFAM" id="SSF46589">
    <property type="entry name" value="tRNA-binding arm"/>
    <property type="match status" value="1"/>
</dbReference>
<dbReference type="PROSITE" id="PS50862">
    <property type="entry name" value="AA_TRNA_LIGASE_II"/>
    <property type="match status" value="1"/>
</dbReference>